<comment type="function">
    <text evidence="1">Channel that opens in response to stretch forces in the membrane lipid bilayer. May participate in the regulation of osmotic pressure changes within the cell.</text>
</comment>
<comment type="subunit">
    <text evidence="1">Homopentamer.</text>
</comment>
<comment type="subcellular location">
    <subcellularLocation>
        <location evidence="1">Cell membrane</location>
        <topology evidence="1">Multi-pass membrane protein</topology>
    </subcellularLocation>
</comment>
<comment type="similarity">
    <text evidence="1">Belongs to the MscL family.</text>
</comment>
<organism>
    <name type="scientific">Enterococcus faecalis (strain ATCC 700802 / V583)</name>
    <dbReference type="NCBI Taxonomy" id="226185"/>
    <lineage>
        <taxon>Bacteria</taxon>
        <taxon>Bacillati</taxon>
        <taxon>Bacillota</taxon>
        <taxon>Bacilli</taxon>
        <taxon>Lactobacillales</taxon>
        <taxon>Enterococcaceae</taxon>
        <taxon>Enterococcus</taxon>
    </lineage>
</organism>
<evidence type="ECO:0000255" key="1">
    <source>
        <dbReference type="HAMAP-Rule" id="MF_00115"/>
    </source>
</evidence>
<name>MSCL_ENTFA</name>
<reference key="1">
    <citation type="journal article" date="2003" name="Science">
        <title>Role of mobile DNA in the evolution of vancomycin-resistant Enterococcus faecalis.</title>
        <authorList>
            <person name="Paulsen I.T."/>
            <person name="Banerjei L."/>
            <person name="Myers G.S.A."/>
            <person name="Nelson K.E."/>
            <person name="Seshadri R."/>
            <person name="Read T.D."/>
            <person name="Fouts D.E."/>
            <person name="Eisen J.A."/>
            <person name="Gill S.R."/>
            <person name="Heidelberg J.F."/>
            <person name="Tettelin H."/>
            <person name="Dodson R.J."/>
            <person name="Umayam L.A."/>
            <person name="Brinkac L.M."/>
            <person name="Beanan M.J."/>
            <person name="Daugherty S.C."/>
            <person name="DeBoy R.T."/>
            <person name="Durkin S.A."/>
            <person name="Kolonay J.F."/>
            <person name="Madupu R."/>
            <person name="Nelson W.C."/>
            <person name="Vamathevan J.J."/>
            <person name="Tran B."/>
            <person name="Upton J."/>
            <person name="Hansen T."/>
            <person name="Shetty J."/>
            <person name="Khouri H.M."/>
            <person name="Utterback T.R."/>
            <person name="Radune D."/>
            <person name="Ketchum K.A."/>
            <person name="Dougherty B.A."/>
            <person name="Fraser C.M."/>
        </authorList>
    </citation>
    <scope>NUCLEOTIDE SEQUENCE [LARGE SCALE GENOMIC DNA]</scope>
    <source>
        <strain>ATCC 700802 / V583</strain>
    </source>
</reference>
<dbReference type="EMBL" id="AE016830">
    <property type="protein sequence ID" value="AAO82828.1"/>
    <property type="molecule type" value="Genomic_DNA"/>
</dbReference>
<dbReference type="RefSeq" id="NP_816758.1">
    <property type="nucleotide sequence ID" value="NC_004668.1"/>
</dbReference>
<dbReference type="RefSeq" id="WP_002354883.1">
    <property type="nucleotide sequence ID" value="NZ_KE136524.1"/>
</dbReference>
<dbReference type="SMR" id="Q82ZB4"/>
<dbReference type="STRING" id="226185.EF_3152"/>
<dbReference type="EnsemblBacteria" id="AAO82828">
    <property type="protein sequence ID" value="AAO82828"/>
    <property type="gene ID" value="EF_3152"/>
</dbReference>
<dbReference type="KEGG" id="efa:EF3152"/>
<dbReference type="PATRIC" id="fig|226185.45.peg.425"/>
<dbReference type="eggNOG" id="COG1970">
    <property type="taxonomic scope" value="Bacteria"/>
</dbReference>
<dbReference type="HOGENOM" id="CLU_095787_1_1_9"/>
<dbReference type="Proteomes" id="UP000001415">
    <property type="component" value="Chromosome"/>
</dbReference>
<dbReference type="GO" id="GO:0005886">
    <property type="term" value="C:plasma membrane"/>
    <property type="evidence" value="ECO:0007669"/>
    <property type="project" value="UniProtKB-SubCell"/>
</dbReference>
<dbReference type="GO" id="GO:0008381">
    <property type="term" value="F:mechanosensitive monoatomic ion channel activity"/>
    <property type="evidence" value="ECO:0007669"/>
    <property type="project" value="UniProtKB-UniRule"/>
</dbReference>
<dbReference type="Gene3D" id="1.10.1200.120">
    <property type="entry name" value="Large-conductance mechanosensitive channel, MscL, domain 1"/>
    <property type="match status" value="1"/>
</dbReference>
<dbReference type="HAMAP" id="MF_00115">
    <property type="entry name" value="MscL"/>
    <property type="match status" value="1"/>
</dbReference>
<dbReference type="InterPro" id="IPR001185">
    <property type="entry name" value="MS_channel"/>
</dbReference>
<dbReference type="InterPro" id="IPR037673">
    <property type="entry name" value="MSC/AndL"/>
</dbReference>
<dbReference type="InterPro" id="IPR036019">
    <property type="entry name" value="MscL_channel"/>
</dbReference>
<dbReference type="NCBIfam" id="TIGR00220">
    <property type="entry name" value="mscL"/>
    <property type="match status" value="1"/>
</dbReference>
<dbReference type="PANTHER" id="PTHR30266:SF2">
    <property type="entry name" value="LARGE-CONDUCTANCE MECHANOSENSITIVE CHANNEL"/>
    <property type="match status" value="1"/>
</dbReference>
<dbReference type="PANTHER" id="PTHR30266">
    <property type="entry name" value="MECHANOSENSITIVE CHANNEL MSCL"/>
    <property type="match status" value="1"/>
</dbReference>
<dbReference type="Pfam" id="PF01741">
    <property type="entry name" value="MscL"/>
    <property type="match status" value="1"/>
</dbReference>
<dbReference type="PRINTS" id="PR01264">
    <property type="entry name" value="MECHCHANNEL"/>
</dbReference>
<dbReference type="SUPFAM" id="SSF81330">
    <property type="entry name" value="Gated mechanosensitive channel"/>
    <property type="match status" value="1"/>
</dbReference>
<proteinExistence type="inferred from homology"/>
<protein>
    <recommendedName>
        <fullName evidence="1">Large-conductance mechanosensitive channel</fullName>
    </recommendedName>
</protein>
<accession>Q82ZB4</accession>
<feature type="chain" id="PRO_0000237998" description="Large-conductance mechanosensitive channel">
    <location>
        <begin position="1"/>
        <end position="149"/>
    </location>
</feature>
<feature type="transmembrane region" description="Helical" evidence="1">
    <location>
        <begin position="8"/>
        <end position="28"/>
    </location>
</feature>
<feature type="transmembrane region" description="Helical" evidence="1">
    <location>
        <begin position="74"/>
        <end position="94"/>
    </location>
</feature>
<gene>
    <name evidence="1" type="primary">mscL</name>
    <name type="ordered locus">EF_3152</name>
</gene>
<keyword id="KW-1003">Cell membrane</keyword>
<keyword id="KW-0407">Ion channel</keyword>
<keyword id="KW-0406">Ion transport</keyword>
<keyword id="KW-0472">Membrane</keyword>
<keyword id="KW-1185">Reference proteome</keyword>
<keyword id="KW-0812">Transmembrane</keyword>
<keyword id="KW-1133">Transmembrane helix</keyword>
<keyword id="KW-0813">Transport</keyword>
<sequence length="149" mass="16127">MIKEFKEFIMRGSVLDLAVGVVIGSAFTAIVTQVVEGLITPLISLIFVLTTGKKSADDALGALVYKVEGVEFNIGSVISALITFLITAFVLFLIVKAANKMKNRGKKEEAAEEEVVPTSEDYLKEIRDLLAAQTPPAETVKTDSTFTEK</sequence>